<keyword id="KW-0341">Growth regulation</keyword>
<keyword id="KW-1185">Reference proteome</keyword>
<protein>
    <recommendedName>
        <fullName evidence="7">Protein LAZY 3</fullName>
        <shortName evidence="7">AtLAZY3</shortName>
    </recommendedName>
    <alternativeName>
        <fullName evidence="6">Protein DEEPER ROOTING 2</fullName>
        <shortName evidence="6">AtDRO2</shortName>
    </alternativeName>
    <alternativeName>
        <fullName evidence="8">Protein LAZY1-LIKE 4</fullName>
    </alternativeName>
    <alternativeName>
        <fullName evidence="5">Protein NEGATIVE GRAVITROPIC RESPONSE OF ROOTS 3</fullName>
        <shortName evidence="5">AtNGR3</shortName>
    </alternativeName>
</protein>
<reference key="1">
    <citation type="journal article" date="2016" name="Nat. Plants">
        <title>Negative gravitropism in plant roots.</title>
        <authorList>
            <person name="Ge L."/>
            <person name="Chen R."/>
        </authorList>
    </citation>
    <scope>NUCLEOTIDE SEQUENCE [MRNA]</scope>
    <scope>FUNCTION</scope>
    <scope>DISRUPTION PHENOTYPE</scope>
</reference>
<reference key="2">
    <citation type="journal article" date="2000" name="Nature">
        <title>Sequence and analysis of chromosome 1 of the plant Arabidopsis thaliana.</title>
        <authorList>
            <person name="Theologis A."/>
            <person name="Ecker J.R."/>
            <person name="Palm C.J."/>
            <person name="Federspiel N.A."/>
            <person name="Kaul S."/>
            <person name="White O."/>
            <person name="Alonso J."/>
            <person name="Altafi H."/>
            <person name="Araujo R."/>
            <person name="Bowman C.L."/>
            <person name="Brooks S.Y."/>
            <person name="Buehler E."/>
            <person name="Chan A."/>
            <person name="Chao Q."/>
            <person name="Chen H."/>
            <person name="Cheuk R.F."/>
            <person name="Chin C.W."/>
            <person name="Chung M.K."/>
            <person name="Conn L."/>
            <person name="Conway A.B."/>
            <person name="Conway A.R."/>
            <person name="Creasy T.H."/>
            <person name="Dewar K."/>
            <person name="Dunn P."/>
            <person name="Etgu P."/>
            <person name="Feldblyum T.V."/>
            <person name="Feng J.-D."/>
            <person name="Fong B."/>
            <person name="Fujii C.Y."/>
            <person name="Gill J.E."/>
            <person name="Goldsmith A.D."/>
            <person name="Haas B."/>
            <person name="Hansen N.F."/>
            <person name="Hughes B."/>
            <person name="Huizar L."/>
            <person name="Hunter J.L."/>
            <person name="Jenkins J."/>
            <person name="Johnson-Hopson C."/>
            <person name="Khan S."/>
            <person name="Khaykin E."/>
            <person name="Kim C.J."/>
            <person name="Koo H.L."/>
            <person name="Kremenetskaia I."/>
            <person name="Kurtz D.B."/>
            <person name="Kwan A."/>
            <person name="Lam B."/>
            <person name="Langin-Hooper S."/>
            <person name="Lee A."/>
            <person name="Lee J.M."/>
            <person name="Lenz C.A."/>
            <person name="Li J.H."/>
            <person name="Li Y.-P."/>
            <person name="Lin X."/>
            <person name="Liu S.X."/>
            <person name="Liu Z.A."/>
            <person name="Luros J.S."/>
            <person name="Maiti R."/>
            <person name="Marziali A."/>
            <person name="Militscher J."/>
            <person name="Miranda M."/>
            <person name="Nguyen M."/>
            <person name="Nierman W.C."/>
            <person name="Osborne B.I."/>
            <person name="Pai G."/>
            <person name="Peterson J."/>
            <person name="Pham P.K."/>
            <person name="Rizzo M."/>
            <person name="Rooney T."/>
            <person name="Rowley D."/>
            <person name="Sakano H."/>
            <person name="Salzberg S.L."/>
            <person name="Schwartz J.R."/>
            <person name="Shinn P."/>
            <person name="Southwick A.M."/>
            <person name="Sun H."/>
            <person name="Tallon L.J."/>
            <person name="Tambunga G."/>
            <person name="Toriumi M.J."/>
            <person name="Town C.D."/>
            <person name="Utterback T."/>
            <person name="Van Aken S."/>
            <person name="Vaysberg M."/>
            <person name="Vysotskaia V.S."/>
            <person name="Walker M."/>
            <person name="Wu D."/>
            <person name="Yu G."/>
            <person name="Fraser C.M."/>
            <person name="Venter J.C."/>
            <person name="Davis R.W."/>
        </authorList>
    </citation>
    <scope>NUCLEOTIDE SEQUENCE [LARGE SCALE GENOMIC DNA]</scope>
    <source>
        <strain>cv. Columbia</strain>
    </source>
</reference>
<reference key="3">
    <citation type="journal article" date="2017" name="Plant J.">
        <title>Araport11: a complete reannotation of the Arabidopsis thaliana reference genome.</title>
        <authorList>
            <person name="Cheng C.Y."/>
            <person name="Krishnakumar V."/>
            <person name="Chan A.P."/>
            <person name="Thibaud-Nissen F."/>
            <person name="Schobel S."/>
            <person name="Town C.D."/>
        </authorList>
    </citation>
    <scope>GENOME REANNOTATION</scope>
    <source>
        <strain>cv. Columbia</strain>
    </source>
</reference>
<reference key="4">
    <citation type="journal article" date="2006" name="Plant Biotechnol. J.">
        <title>Simultaneous high-throughput recombinational cloning of open reading frames in closed and open configurations.</title>
        <authorList>
            <person name="Underwood B.A."/>
            <person name="Vanderhaeghen R."/>
            <person name="Whitford R."/>
            <person name="Town C.D."/>
            <person name="Hilson P."/>
        </authorList>
    </citation>
    <scope>NUCLEOTIDE SEQUENCE [LARGE SCALE MRNA]</scope>
    <source>
        <strain>cv. Columbia</strain>
    </source>
</reference>
<reference key="5">
    <citation type="journal article" date="2017" name="Plant J.">
        <title>DRO1 influences root system architecture in Arabidopsis and Prunus species.</title>
        <authorList>
            <person name="Guseman J.M."/>
            <person name="Webb K."/>
            <person name="Srinivasan C."/>
            <person name="Dardick C."/>
        </authorList>
    </citation>
    <scope>TISSUE SPECIFICITY</scope>
</reference>
<reference key="6">
    <citation type="journal article" date="2017" name="Plant Physiol.">
        <title>LAZY genes mediate the effects of gravity on auxin gradients and plant architecture.</title>
        <authorList>
            <person name="Yoshihara T."/>
            <person name="Spalding E.P."/>
        </authorList>
    </citation>
    <scope>FUNCTION</scope>
</reference>
<sequence>MKIFSWVQRKLSGKKRVPTSDSSQEPSSPPLSKEVQGLPQDEETFLAIGTLGNNIFPKQEEEEEETDSSKDITPVNTDVTIGKKKSLSFLLKKMFVCTSGFKTPPPLLDLSRGDSLHNTRMEKMLRTILNKKIHPQRSNSIAKKYLESNHKIMDEARSSVDANKWVKTDSECEIF</sequence>
<name>LAZY3_ARATH</name>
<gene>
    <name evidence="7" type="primary">LAZY3</name>
    <name evidence="6" type="synonym">DRO2</name>
    <name evidence="8" type="synonym">LZY4</name>
    <name evidence="5" type="synonym">NGR3</name>
    <name evidence="9" type="ordered locus">At1g19115</name>
    <name evidence="10" type="ORF">F14D16.27</name>
</gene>
<dbReference type="EMBL" id="KT021798">
    <property type="protein sequence ID" value="ANJ86425.1"/>
    <property type="molecule type" value="mRNA"/>
</dbReference>
<dbReference type="EMBL" id="AC068602">
    <property type="protein sequence ID" value="AAF79295.1"/>
    <property type="status" value="ALT_SEQ"/>
    <property type="molecule type" value="Genomic_DNA"/>
</dbReference>
<dbReference type="EMBL" id="CP002684">
    <property type="protein sequence ID" value="AEE29806.1"/>
    <property type="molecule type" value="Genomic_DNA"/>
</dbReference>
<dbReference type="EMBL" id="DQ487489">
    <property type="protein sequence ID" value="ABF59201.1"/>
    <property type="molecule type" value="mRNA"/>
</dbReference>
<dbReference type="EMBL" id="DQ652641">
    <property type="protein sequence ID" value="ABK28324.1"/>
    <property type="status" value="ALT_SEQ"/>
    <property type="molecule type" value="mRNA"/>
</dbReference>
<dbReference type="PIR" id="E86324">
    <property type="entry name" value="E86324"/>
</dbReference>
<dbReference type="RefSeq" id="NP_001117313.1">
    <property type="nucleotide sequence ID" value="NM_001123841.4"/>
</dbReference>
<dbReference type="PaxDb" id="3702-AT1G19115.3"/>
<dbReference type="EnsemblPlants" id="AT1G19115.3">
    <property type="protein sequence ID" value="AT1G19115.3"/>
    <property type="gene ID" value="AT1G19115"/>
</dbReference>
<dbReference type="GeneID" id="5007705"/>
<dbReference type="Gramene" id="AT1G19115.3">
    <property type="protein sequence ID" value="AT1G19115.3"/>
    <property type="gene ID" value="AT1G19115"/>
</dbReference>
<dbReference type="KEGG" id="ath:AT1G19115"/>
<dbReference type="Araport" id="AT1G19115"/>
<dbReference type="TAIR" id="AT1G19115">
    <property type="gene designation" value="DRO2"/>
</dbReference>
<dbReference type="HOGENOM" id="CLU_068790_0_0_1"/>
<dbReference type="InParanoid" id="Q1G3U5"/>
<dbReference type="OMA" id="YLENHHK"/>
<dbReference type="PhylomeDB" id="Q1G3U5"/>
<dbReference type="PRO" id="PR:Q1G3U5"/>
<dbReference type="Proteomes" id="UP000006548">
    <property type="component" value="Chromosome 1"/>
</dbReference>
<dbReference type="ExpressionAtlas" id="Q1G3U5">
    <property type="expression patterns" value="baseline and differential"/>
</dbReference>
<dbReference type="GO" id="GO:0009630">
    <property type="term" value="P:gravitropism"/>
    <property type="evidence" value="ECO:0000315"/>
    <property type="project" value="TAIR"/>
</dbReference>
<dbReference type="GO" id="GO:0040008">
    <property type="term" value="P:regulation of growth"/>
    <property type="evidence" value="ECO:0007669"/>
    <property type="project" value="InterPro"/>
</dbReference>
<dbReference type="InterPro" id="IPR044683">
    <property type="entry name" value="LAZY"/>
</dbReference>
<dbReference type="PANTHER" id="PTHR34045">
    <property type="entry name" value="OS03G0406300 PROTEIN"/>
    <property type="match status" value="1"/>
</dbReference>
<dbReference type="PANTHER" id="PTHR34045:SF3">
    <property type="entry name" value="PROTEIN LAZY 4"/>
    <property type="match status" value="1"/>
</dbReference>
<feature type="chain" id="PRO_0000451019" description="Protein LAZY 3">
    <location>
        <begin position="1"/>
        <end position="175"/>
    </location>
</feature>
<feature type="region of interest" description="Disordered" evidence="1">
    <location>
        <begin position="9"/>
        <end position="39"/>
    </location>
</feature>
<feature type="short sequence motif" description="IGT motif" evidence="8">
    <location>
        <begin position="44"/>
        <end position="50"/>
    </location>
</feature>
<feature type="sequence conflict" description="In Ref. 4; ABK28324." evidence="8" ref="4">
    <location>
        <position position="60"/>
    </location>
</feature>
<organism>
    <name type="scientific">Arabidopsis thaliana</name>
    <name type="common">Mouse-ear cress</name>
    <dbReference type="NCBI Taxonomy" id="3702"/>
    <lineage>
        <taxon>Eukaryota</taxon>
        <taxon>Viridiplantae</taxon>
        <taxon>Streptophyta</taxon>
        <taxon>Embryophyta</taxon>
        <taxon>Tracheophyta</taxon>
        <taxon>Spermatophyta</taxon>
        <taxon>Magnoliopsida</taxon>
        <taxon>eudicotyledons</taxon>
        <taxon>Gunneridae</taxon>
        <taxon>Pentapetalae</taxon>
        <taxon>rosids</taxon>
        <taxon>malvids</taxon>
        <taxon>Brassicales</taxon>
        <taxon>Brassicaceae</taxon>
        <taxon>Camelineae</taxon>
        <taxon>Arabidopsis</taxon>
    </lineage>
</organism>
<evidence type="ECO:0000256" key="1">
    <source>
        <dbReference type="SAM" id="MobiDB-lite"/>
    </source>
</evidence>
<evidence type="ECO:0000269" key="2">
    <source>
    </source>
</evidence>
<evidence type="ECO:0000269" key="3">
    <source>
    </source>
</evidence>
<evidence type="ECO:0000269" key="4">
    <source>
    </source>
</evidence>
<evidence type="ECO:0000303" key="5">
    <source>
    </source>
</evidence>
<evidence type="ECO:0000303" key="6">
    <source>
    </source>
</evidence>
<evidence type="ECO:0000303" key="7">
    <source>
    </source>
</evidence>
<evidence type="ECO:0000305" key="8"/>
<evidence type="ECO:0000312" key="9">
    <source>
        <dbReference type="Araport" id="AT1G19115"/>
    </source>
</evidence>
<evidence type="ECO:0000312" key="10">
    <source>
        <dbReference type="EMBL" id="AAF79295.1"/>
    </source>
</evidence>
<comment type="function">
    <text evidence="2 4">Involved in the regulation of root gravitropism (PubMed:27748769). Functions redundantly with LAZY2 and LAZY4 in the control of root gravitropism (PubMed:27748769). Functions redundantly with LAZY1, LAZY2 and LAZY4 to control plant architecture by coupling gravity sensing to the formation of auxin gradients (PubMed:28821594).</text>
</comment>
<comment type="tissue specificity">
    <text evidence="3 4">Specifically expressed in roots (PubMed:28029738). Expressed in root tips of young seedlings (PubMed:28821594).</text>
</comment>
<comment type="disruption phenotype">
    <text evidence="2">No visible phenotype under normal growth conditions (PubMed:27748769). Roots of plants lacking LAZY2, LAZY3 and LAZY4 exhibit a negative gravitropic response, and grow upward in the opposite direrction of root gravitropism (PubMed:27748769).</text>
</comment>
<comment type="similarity">
    <text evidence="8">Belongs to the LAZY family.</text>
</comment>
<comment type="sequence caution" evidence="8">
    <conflict type="erroneous gene model prediction">
        <sequence resource="EMBL-CDS" id="AAF79295"/>
    </conflict>
</comment>
<comment type="sequence caution" evidence="8">
    <conflict type="erroneous termination">
        <sequence resource="EMBL-CDS" id="ABK28324"/>
    </conflict>
    <text>Extended C-terminus.</text>
</comment>
<proteinExistence type="evidence at transcript level"/>
<accession>Q1G3U5</accession>
<accession>A0MDM5</accession>
<accession>Q9LMB6</accession>